<reference key="1">
    <citation type="submission" date="2007-04" db="EMBL/GenBank/DDBJ databases">
        <title>Complete sequence of chromosome of Rhodobacter sphaeroides ATCC 17025.</title>
        <authorList>
            <consortium name="US DOE Joint Genome Institute"/>
            <person name="Copeland A."/>
            <person name="Lucas S."/>
            <person name="Lapidus A."/>
            <person name="Barry K."/>
            <person name="Detter J.C."/>
            <person name="Glavina del Rio T."/>
            <person name="Hammon N."/>
            <person name="Israni S."/>
            <person name="Dalin E."/>
            <person name="Tice H."/>
            <person name="Pitluck S."/>
            <person name="Chertkov O."/>
            <person name="Brettin T."/>
            <person name="Bruce D."/>
            <person name="Han C."/>
            <person name="Schmutz J."/>
            <person name="Larimer F."/>
            <person name="Land M."/>
            <person name="Hauser L."/>
            <person name="Kyrpides N."/>
            <person name="Kim E."/>
            <person name="Richardson P."/>
            <person name="Mackenzie C."/>
            <person name="Choudhary M."/>
            <person name="Donohue T.J."/>
            <person name="Kaplan S."/>
        </authorList>
    </citation>
    <scope>NUCLEOTIDE SEQUENCE [LARGE SCALE GENOMIC DNA]</scope>
    <source>
        <strain>ATCC 17025 / ATH 2.4.3</strain>
    </source>
</reference>
<comment type="similarity">
    <text evidence="1">Belongs to the UPF0434 family.</text>
</comment>
<protein>
    <recommendedName>
        <fullName evidence="1">UPF0434 protein Rsph17025_2896</fullName>
    </recommendedName>
</protein>
<evidence type="ECO:0000255" key="1">
    <source>
        <dbReference type="HAMAP-Rule" id="MF_01187"/>
    </source>
</evidence>
<feature type="chain" id="PRO_1000065852" description="UPF0434 protein Rsph17025_2896">
    <location>
        <begin position="1"/>
        <end position="59"/>
    </location>
</feature>
<dbReference type="EMBL" id="CP000661">
    <property type="protein sequence ID" value="ABP71782.1"/>
    <property type="molecule type" value="Genomic_DNA"/>
</dbReference>
<dbReference type="SMR" id="A4WWL8"/>
<dbReference type="STRING" id="349102.Rsph17025_2896"/>
<dbReference type="KEGG" id="rsq:Rsph17025_2896"/>
<dbReference type="eggNOG" id="COG2835">
    <property type="taxonomic scope" value="Bacteria"/>
</dbReference>
<dbReference type="HOGENOM" id="CLU_155659_2_2_5"/>
<dbReference type="BioCyc" id="RSPH349102:G1G8M-2991-MONOMER"/>
<dbReference type="GO" id="GO:0005829">
    <property type="term" value="C:cytosol"/>
    <property type="evidence" value="ECO:0007669"/>
    <property type="project" value="TreeGrafter"/>
</dbReference>
<dbReference type="FunFam" id="2.20.25.10:FF:000002">
    <property type="entry name" value="UPF0434 protein YcaR"/>
    <property type="match status" value="1"/>
</dbReference>
<dbReference type="Gene3D" id="2.20.25.10">
    <property type="match status" value="1"/>
</dbReference>
<dbReference type="HAMAP" id="MF_01187">
    <property type="entry name" value="UPF0434"/>
    <property type="match status" value="1"/>
</dbReference>
<dbReference type="InterPro" id="IPR005651">
    <property type="entry name" value="Trm112-like"/>
</dbReference>
<dbReference type="PANTHER" id="PTHR33505:SF4">
    <property type="entry name" value="PROTEIN PREY, MITOCHONDRIAL"/>
    <property type="match status" value="1"/>
</dbReference>
<dbReference type="PANTHER" id="PTHR33505">
    <property type="entry name" value="ZGC:162634"/>
    <property type="match status" value="1"/>
</dbReference>
<dbReference type="Pfam" id="PF03966">
    <property type="entry name" value="Trm112p"/>
    <property type="match status" value="1"/>
</dbReference>
<dbReference type="SUPFAM" id="SSF158997">
    <property type="entry name" value="Trm112p-like"/>
    <property type="match status" value="1"/>
</dbReference>
<accession>A4WWL8</accession>
<gene>
    <name type="ordered locus">Rsph17025_2896</name>
</gene>
<sequence length="59" mass="6708">MTESPQFDRRMLEALVCPVSQSGLSYDAERQELVSRQARLAFPIRDGIPIMLVSEAREL</sequence>
<name>Y2896_CERS5</name>
<organism>
    <name type="scientific">Cereibacter sphaeroides (strain ATCC 17025 / ATH 2.4.3)</name>
    <name type="common">Rhodobacter sphaeroides</name>
    <dbReference type="NCBI Taxonomy" id="349102"/>
    <lineage>
        <taxon>Bacteria</taxon>
        <taxon>Pseudomonadati</taxon>
        <taxon>Pseudomonadota</taxon>
        <taxon>Alphaproteobacteria</taxon>
        <taxon>Rhodobacterales</taxon>
        <taxon>Paracoccaceae</taxon>
        <taxon>Cereibacter</taxon>
    </lineage>
</organism>
<proteinExistence type="inferred from homology"/>